<proteinExistence type="inferred from homology"/>
<protein>
    <recommendedName>
        <fullName evidence="1">UDP-N-acetylmuramate--L-alanine ligase</fullName>
        <ecNumber evidence="1">6.3.2.8</ecNumber>
    </recommendedName>
    <alternativeName>
        <fullName evidence="1">UDP-N-acetylmuramoyl-L-alanine synthetase</fullName>
    </alternativeName>
</protein>
<keyword id="KW-0067">ATP-binding</keyword>
<keyword id="KW-0131">Cell cycle</keyword>
<keyword id="KW-0132">Cell division</keyword>
<keyword id="KW-0133">Cell shape</keyword>
<keyword id="KW-0961">Cell wall biogenesis/degradation</keyword>
<keyword id="KW-0963">Cytoplasm</keyword>
<keyword id="KW-0436">Ligase</keyword>
<keyword id="KW-0547">Nucleotide-binding</keyword>
<keyword id="KW-0573">Peptidoglycan synthesis</keyword>
<gene>
    <name evidence="1" type="primary">murC</name>
    <name type="ordered locus">PEPE_0686</name>
</gene>
<evidence type="ECO:0000255" key="1">
    <source>
        <dbReference type="HAMAP-Rule" id="MF_00046"/>
    </source>
</evidence>
<dbReference type="EC" id="6.3.2.8" evidence="1"/>
<dbReference type="EMBL" id="CP000422">
    <property type="protein sequence ID" value="ABJ67747.1"/>
    <property type="molecule type" value="Genomic_DNA"/>
</dbReference>
<dbReference type="RefSeq" id="WP_002833786.1">
    <property type="nucleotide sequence ID" value="NC_008525.1"/>
</dbReference>
<dbReference type="SMR" id="Q03GC5"/>
<dbReference type="STRING" id="278197.PEPE_0686"/>
<dbReference type="GeneID" id="33062200"/>
<dbReference type="KEGG" id="ppe:PEPE_0686"/>
<dbReference type="eggNOG" id="COG0773">
    <property type="taxonomic scope" value="Bacteria"/>
</dbReference>
<dbReference type="HOGENOM" id="CLU_028104_1_0_9"/>
<dbReference type="OrthoDB" id="9804126at2"/>
<dbReference type="UniPathway" id="UPA00219"/>
<dbReference type="Proteomes" id="UP000000773">
    <property type="component" value="Chromosome"/>
</dbReference>
<dbReference type="GO" id="GO:0005737">
    <property type="term" value="C:cytoplasm"/>
    <property type="evidence" value="ECO:0007669"/>
    <property type="project" value="UniProtKB-SubCell"/>
</dbReference>
<dbReference type="GO" id="GO:0005524">
    <property type="term" value="F:ATP binding"/>
    <property type="evidence" value="ECO:0007669"/>
    <property type="project" value="UniProtKB-UniRule"/>
</dbReference>
<dbReference type="GO" id="GO:0008763">
    <property type="term" value="F:UDP-N-acetylmuramate-L-alanine ligase activity"/>
    <property type="evidence" value="ECO:0007669"/>
    <property type="project" value="UniProtKB-UniRule"/>
</dbReference>
<dbReference type="GO" id="GO:0051301">
    <property type="term" value="P:cell division"/>
    <property type="evidence" value="ECO:0007669"/>
    <property type="project" value="UniProtKB-KW"/>
</dbReference>
<dbReference type="GO" id="GO:0071555">
    <property type="term" value="P:cell wall organization"/>
    <property type="evidence" value="ECO:0007669"/>
    <property type="project" value="UniProtKB-KW"/>
</dbReference>
<dbReference type="GO" id="GO:0009252">
    <property type="term" value="P:peptidoglycan biosynthetic process"/>
    <property type="evidence" value="ECO:0007669"/>
    <property type="project" value="UniProtKB-UniRule"/>
</dbReference>
<dbReference type="GO" id="GO:0008360">
    <property type="term" value="P:regulation of cell shape"/>
    <property type="evidence" value="ECO:0007669"/>
    <property type="project" value="UniProtKB-KW"/>
</dbReference>
<dbReference type="Gene3D" id="3.90.190.20">
    <property type="entry name" value="Mur ligase, C-terminal domain"/>
    <property type="match status" value="1"/>
</dbReference>
<dbReference type="Gene3D" id="3.40.1190.10">
    <property type="entry name" value="Mur-like, catalytic domain"/>
    <property type="match status" value="1"/>
</dbReference>
<dbReference type="Gene3D" id="3.40.50.720">
    <property type="entry name" value="NAD(P)-binding Rossmann-like Domain"/>
    <property type="match status" value="1"/>
</dbReference>
<dbReference type="HAMAP" id="MF_00046">
    <property type="entry name" value="MurC"/>
    <property type="match status" value="1"/>
</dbReference>
<dbReference type="InterPro" id="IPR036565">
    <property type="entry name" value="Mur-like_cat_sf"/>
</dbReference>
<dbReference type="InterPro" id="IPR004101">
    <property type="entry name" value="Mur_ligase_C"/>
</dbReference>
<dbReference type="InterPro" id="IPR036615">
    <property type="entry name" value="Mur_ligase_C_dom_sf"/>
</dbReference>
<dbReference type="InterPro" id="IPR013221">
    <property type="entry name" value="Mur_ligase_cen"/>
</dbReference>
<dbReference type="InterPro" id="IPR000713">
    <property type="entry name" value="Mur_ligase_N"/>
</dbReference>
<dbReference type="InterPro" id="IPR050061">
    <property type="entry name" value="MurCDEF_pg_biosynth"/>
</dbReference>
<dbReference type="InterPro" id="IPR005758">
    <property type="entry name" value="UDP-N-AcMur_Ala_ligase_MurC"/>
</dbReference>
<dbReference type="NCBIfam" id="TIGR01082">
    <property type="entry name" value="murC"/>
    <property type="match status" value="1"/>
</dbReference>
<dbReference type="PANTHER" id="PTHR43445:SF3">
    <property type="entry name" value="UDP-N-ACETYLMURAMATE--L-ALANINE LIGASE"/>
    <property type="match status" value="1"/>
</dbReference>
<dbReference type="PANTHER" id="PTHR43445">
    <property type="entry name" value="UDP-N-ACETYLMURAMATE--L-ALANINE LIGASE-RELATED"/>
    <property type="match status" value="1"/>
</dbReference>
<dbReference type="Pfam" id="PF01225">
    <property type="entry name" value="Mur_ligase"/>
    <property type="match status" value="1"/>
</dbReference>
<dbReference type="Pfam" id="PF02875">
    <property type="entry name" value="Mur_ligase_C"/>
    <property type="match status" value="1"/>
</dbReference>
<dbReference type="Pfam" id="PF08245">
    <property type="entry name" value="Mur_ligase_M"/>
    <property type="match status" value="1"/>
</dbReference>
<dbReference type="SUPFAM" id="SSF51984">
    <property type="entry name" value="MurCD N-terminal domain"/>
    <property type="match status" value="1"/>
</dbReference>
<dbReference type="SUPFAM" id="SSF53623">
    <property type="entry name" value="MurD-like peptide ligases, catalytic domain"/>
    <property type="match status" value="1"/>
</dbReference>
<dbReference type="SUPFAM" id="SSF53244">
    <property type="entry name" value="MurD-like peptide ligases, peptide-binding domain"/>
    <property type="match status" value="1"/>
</dbReference>
<reference key="1">
    <citation type="journal article" date="2006" name="Proc. Natl. Acad. Sci. U.S.A.">
        <title>Comparative genomics of the lactic acid bacteria.</title>
        <authorList>
            <person name="Makarova K.S."/>
            <person name="Slesarev A."/>
            <person name="Wolf Y.I."/>
            <person name="Sorokin A."/>
            <person name="Mirkin B."/>
            <person name="Koonin E.V."/>
            <person name="Pavlov A."/>
            <person name="Pavlova N."/>
            <person name="Karamychev V."/>
            <person name="Polouchine N."/>
            <person name="Shakhova V."/>
            <person name="Grigoriev I."/>
            <person name="Lou Y."/>
            <person name="Rohksar D."/>
            <person name="Lucas S."/>
            <person name="Huang K."/>
            <person name="Goodstein D.M."/>
            <person name="Hawkins T."/>
            <person name="Plengvidhya V."/>
            <person name="Welker D."/>
            <person name="Hughes J."/>
            <person name="Goh Y."/>
            <person name="Benson A."/>
            <person name="Baldwin K."/>
            <person name="Lee J.-H."/>
            <person name="Diaz-Muniz I."/>
            <person name="Dosti B."/>
            <person name="Smeianov V."/>
            <person name="Wechter W."/>
            <person name="Barabote R."/>
            <person name="Lorca G."/>
            <person name="Altermann E."/>
            <person name="Barrangou R."/>
            <person name="Ganesan B."/>
            <person name="Xie Y."/>
            <person name="Rawsthorne H."/>
            <person name="Tamir D."/>
            <person name="Parker C."/>
            <person name="Breidt F."/>
            <person name="Broadbent J.R."/>
            <person name="Hutkins R."/>
            <person name="O'Sullivan D."/>
            <person name="Steele J."/>
            <person name="Unlu G."/>
            <person name="Saier M.H. Jr."/>
            <person name="Klaenhammer T."/>
            <person name="Richardson P."/>
            <person name="Kozyavkin S."/>
            <person name="Weimer B.C."/>
            <person name="Mills D.A."/>
        </authorList>
    </citation>
    <scope>NUCLEOTIDE SEQUENCE [LARGE SCALE GENOMIC DNA]</scope>
    <source>
        <strain>ATCC 25745 / CCUG 21536 / LMG 10740 / 183-1w</strain>
    </source>
</reference>
<accession>Q03GC5</accession>
<name>MURC_PEDPA</name>
<comment type="function">
    <text evidence="1">Cell wall formation.</text>
</comment>
<comment type="catalytic activity">
    <reaction evidence="1">
        <text>UDP-N-acetyl-alpha-D-muramate + L-alanine + ATP = UDP-N-acetyl-alpha-D-muramoyl-L-alanine + ADP + phosphate + H(+)</text>
        <dbReference type="Rhea" id="RHEA:23372"/>
        <dbReference type="ChEBI" id="CHEBI:15378"/>
        <dbReference type="ChEBI" id="CHEBI:30616"/>
        <dbReference type="ChEBI" id="CHEBI:43474"/>
        <dbReference type="ChEBI" id="CHEBI:57972"/>
        <dbReference type="ChEBI" id="CHEBI:70757"/>
        <dbReference type="ChEBI" id="CHEBI:83898"/>
        <dbReference type="ChEBI" id="CHEBI:456216"/>
        <dbReference type="EC" id="6.3.2.8"/>
    </reaction>
</comment>
<comment type="pathway">
    <text evidence="1">Cell wall biogenesis; peptidoglycan biosynthesis.</text>
</comment>
<comment type="subcellular location">
    <subcellularLocation>
        <location evidence="1">Cytoplasm</location>
    </subcellularLocation>
</comment>
<comment type="similarity">
    <text evidence="1">Belongs to the MurCDEF family.</text>
</comment>
<sequence>MDKDSTYYFIGIKGSGMSSLALILHDEGYKVEGSDIEQYTFTQKGLEAAGIKILPFDPANLREGLTVIAGNAFTDEHPEIKKARAMGLKVIRYHELLGQMLDKYTSIGVAGTHGKTSTTGLLAHVLSGLDKTSYLIGDGTGKGIPDARFFVFEADEYRRHFIAYHPDYMIMTNVDFDHPDYYKDLADVESAFQQVADQVHKGIFAWGEDESLRKINTSVPVYYYGTKENDDFQATNISRTTTGSEFDVIHKGEKLGRFTINLFGEHNVLNSLAVIAVAYFEKVDLDLVQKELLTYQGVKRRFSKEAVADNILIDDYAHHPSEIKATLDAARQEFPDKKIVAVFQPHTYSRTAALMDGFAKSLSLADQVVLTEIFGSAREDAGAVSSQDLADKIGNNTKLIHQDDLSAISDLHDAVLVFMGAGDITKYENAYKALFK</sequence>
<feature type="chain" id="PRO_0000336852" description="UDP-N-acetylmuramate--L-alanine ligase">
    <location>
        <begin position="1"/>
        <end position="436"/>
    </location>
</feature>
<feature type="binding site" evidence="1">
    <location>
        <begin position="111"/>
        <end position="117"/>
    </location>
    <ligand>
        <name>ATP</name>
        <dbReference type="ChEBI" id="CHEBI:30616"/>
    </ligand>
</feature>
<organism>
    <name type="scientific">Pediococcus pentosaceus (strain ATCC 25745 / CCUG 21536 / LMG 10740 / 183-1w)</name>
    <dbReference type="NCBI Taxonomy" id="278197"/>
    <lineage>
        <taxon>Bacteria</taxon>
        <taxon>Bacillati</taxon>
        <taxon>Bacillota</taxon>
        <taxon>Bacilli</taxon>
        <taxon>Lactobacillales</taxon>
        <taxon>Lactobacillaceae</taxon>
        <taxon>Pediococcus</taxon>
    </lineage>
</organism>